<organism>
    <name type="scientific">Lawsonia intracellularis (strain PHE/MN1-00)</name>
    <dbReference type="NCBI Taxonomy" id="363253"/>
    <lineage>
        <taxon>Bacteria</taxon>
        <taxon>Pseudomonadati</taxon>
        <taxon>Thermodesulfobacteriota</taxon>
        <taxon>Desulfovibrionia</taxon>
        <taxon>Desulfovibrionales</taxon>
        <taxon>Desulfovibrionaceae</taxon>
        <taxon>Lawsonia</taxon>
    </lineage>
</organism>
<keyword id="KW-1185">Reference proteome</keyword>
<keyword id="KW-0687">Ribonucleoprotein</keyword>
<keyword id="KW-0689">Ribosomal protein</keyword>
<keyword id="KW-0694">RNA-binding</keyword>
<keyword id="KW-0699">rRNA-binding</keyword>
<gene>
    <name evidence="1" type="primary">rplC</name>
    <name type="ordered locus">LI0960</name>
</gene>
<proteinExistence type="inferred from homology"/>
<accession>Q1MPR3</accession>
<name>RL3_LAWIP</name>
<dbReference type="EMBL" id="AM180252">
    <property type="protein sequence ID" value="CAJ55014.1"/>
    <property type="molecule type" value="Genomic_DNA"/>
</dbReference>
<dbReference type="RefSeq" id="WP_011527043.1">
    <property type="nucleotide sequence ID" value="NC_008011.1"/>
</dbReference>
<dbReference type="SMR" id="Q1MPR3"/>
<dbReference type="STRING" id="363253.LI0960"/>
<dbReference type="KEGG" id="lip:LI0960"/>
<dbReference type="eggNOG" id="COG0087">
    <property type="taxonomic scope" value="Bacteria"/>
</dbReference>
<dbReference type="HOGENOM" id="CLU_044142_4_1_7"/>
<dbReference type="OrthoDB" id="9806135at2"/>
<dbReference type="Proteomes" id="UP000002430">
    <property type="component" value="Chromosome"/>
</dbReference>
<dbReference type="GO" id="GO:0022625">
    <property type="term" value="C:cytosolic large ribosomal subunit"/>
    <property type="evidence" value="ECO:0007669"/>
    <property type="project" value="TreeGrafter"/>
</dbReference>
<dbReference type="GO" id="GO:0019843">
    <property type="term" value="F:rRNA binding"/>
    <property type="evidence" value="ECO:0007669"/>
    <property type="project" value="UniProtKB-UniRule"/>
</dbReference>
<dbReference type="GO" id="GO:0003735">
    <property type="term" value="F:structural constituent of ribosome"/>
    <property type="evidence" value="ECO:0007669"/>
    <property type="project" value="InterPro"/>
</dbReference>
<dbReference type="GO" id="GO:0006412">
    <property type="term" value="P:translation"/>
    <property type="evidence" value="ECO:0007669"/>
    <property type="project" value="UniProtKB-UniRule"/>
</dbReference>
<dbReference type="FunFam" id="2.40.30.10:FF:000004">
    <property type="entry name" value="50S ribosomal protein L3"/>
    <property type="match status" value="1"/>
</dbReference>
<dbReference type="FunFam" id="3.30.160.810:FF:000001">
    <property type="entry name" value="50S ribosomal protein L3"/>
    <property type="match status" value="1"/>
</dbReference>
<dbReference type="Gene3D" id="3.30.160.810">
    <property type="match status" value="1"/>
</dbReference>
<dbReference type="Gene3D" id="2.40.30.10">
    <property type="entry name" value="Translation factors"/>
    <property type="match status" value="1"/>
</dbReference>
<dbReference type="HAMAP" id="MF_01325_B">
    <property type="entry name" value="Ribosomal_uL3_B"/>
    <property type="match status" value="1"/>
</dbReference>
<dbReference type="InterPro" id="IPR000597">
    <property type="entry name" value="Ribosomal_uL3"/>
</dbReference>
<dbReference type="InterPro" id="IPR019927">
    <property type="entry name" value="Ribosomal_uL3_bac/org-type"/>
</dbReference>
<dbReference type="InterPro" id="IPR009000">
    <property type="entry name" value="Transl_B-barrel_sf"/>
</dbReference>
<dbReference type="NCBIfam" id="TIGR03625">
    <property type="entry name" value="L3_bact"/>
    <property type="match status" value="1"/>
</dbReference>
<dbReference type="PANTHER" id="PTHR11229">
    <property type="entry name" value="50S RIBOSOMAL PROTEIN L3"/>
    <property type="match status" value="1"/>
</dbReference>
<dbReference type="PANTHER" id="PTHR11229:SF16">
    <property type="entry name" value="LARGE RIBOSOMAL SUBUNIT PROTEIN UL3C"/>
    <property type="match status" value="1"/>
</dbReference>
<dbReference type="Pfam" id="PF00297">
    <property type="entry name" value="Ribosomal_L3"/>
    <property type="match status" value="1"/>
</dbReference>
<dbReference type="SUPFAM" id="SSF50447">
    <property type="entry name" value="Translation proteins"/>
    <property type="match status" value="1"/>
</dbReference>
<feature type="chain" id="PRO_1000052069" description="Large ribosomal subunit protein uL3">
    <location>
        <begin position="1"/>
        <end position="210"/>
    </location>
</feature>
<reference key="1">
    <citation type="submission" date="2005-11" db="EMBL/GenBank/DDBJ databases">
        <title>The complete genome sequence of Lawsonia intracellularis: the causative agent of proliferative enteropathy.</title>
        <authorList>
            <person name="Kaur K."/>
            <person name="Zhang Q."/>
            <person name="Beckler D."/>
            <person name="Munir S."/>
            <person name="Li L."/>
            <person name="Kinsley K."/>
            <person name="Herron L."/>
            <person name="Peterson A."/>
            <person name="May B."/>
            <person name="Singh S."/>
            <person name="Gebhart C."/>
            <person name="Kapur V."/>
        </authorList>
    </citation>
    <scope>NUCLEOTIDE SEQUENCE [LARGE SCALE GENOMIC DNA]</scope>
    <source>
        <strain>PHE/MN1-00</strain>
    </source>
</reference>
<protein>
    <recommendedName>
        <fullName evidence="1">Large ribosomal subunit protein uL3</fullName>
    </recommendedName>
    <alternativeName>
        <fullName evidence="2">50S ribosomal protein L3</fullName>
    </alternativeName>
</protein>
<comment type="function">
    <text evidence="1">One of the primary rRNA binding proteins, it binds directly near the 3'-end of the 23S rRNA, where it nucleates assembly of the 50S subunit.</text>
</comment>
<comment type="subunit">
    <text evidence="1">Part of the 50S ribosomal subunit. Forms a cluster with proteins L14 and L19.</text>
</comment>
<comment type="similarity">
    <text evidence="1">Belongs to the universal ribosomal protein uL3 family.</text>
</comment>
<evidence type="ECO:0000255" key="1">
    <source>
        <dbReference type="HAMAP-Rule" id="MF_01325"/>
    </source>
</evidence>
<evidence type="ECO:0000305" key="2"/>
<sequence>MSEKIGILGQKLGMTQVFGGNGFAVPVTVVQAGPCPIVQIKTVEKEGYNALQIAFGEGKKKHVSKSMQGHFSKAGLSLYRKIQEVRLKGSLTSYEVGQVLTVGLFSVGDKVKITGKSIGKGFQGAMRRWNFAGSKDSHGCEKVHRAAGSIGNNTFPGHVFKGKKMAGHWGTEKVTVQNLVVVDIRPEDNIILIHGSVPGPKNSFLFISMQ</sequence>